<sequence length="195" mass="20932">MHFSSCVLVSALAIVTNVATASPPPLHQLSRPALKDSTIFRSTVHCADCPEGNCYKCTLGHNNTLIANTGGMAYLRALVGFQLPVPAKKVKQCTVQFPAFVKLMEAPINITVSEAKSNDWDEDTVTGENAPDSGEPFSTSHVPALTNPPALDATEACKNAAENGDFSIYVGAQFGRFEIWSKDSGNPAILHTYYK</sequence>
<comment type="subcellular location">
    <subcellularLocation>
        <location evidence="4 5">Secreted</location>
    </subcellularLocation>
</comment>
<feature type="signal peptide" evidence="1">
    <location>
        <begin position="1"/>
        <end position="21"/>
    </location>
</feature>
<feature type="chain" id="PRO_0000434486" description="Uncharacterized secreted protein ARB_00595" evidence="1">
    <location>
        <begin position="22"/>
        <end position="195"/>
    </location>
</feature>
<feature type="region of interest" description="Disordered" evidence="3">
    <location>
        <begin position="119"/>
        <end position="141"/>
    </location>
</feature>
<feature type="glycosylation site" description="N-linked (GlcNAc...) asparagine" evidence="2">
    <location>
        <position position="62"/>
    </location>
</feature>
<feature type="glycosylation site" description="N-linked (GlcNAc...) asparagine" evidence="2">
    <location>
        <position position="109"/>
    </location>
</feature>
<gene>
    <name type="ORF">ARB_00595</name>
</gene>
<evidence type="ECO:0000255" key="1"/>
<evidence type="ECO:0000255" key="2">
    <source>
        <dbReference type="PROSITE-ProRule" id="PRU00498"/>
    </source>
</evidence>
<evidence type="ECO:0000256" key="3">
    <source>
        <dbReference type="SAM" id="MobiDB-lite"/>
    </source>
</evidence>
<evidence type="ECO:0000269" key="4">
    <source>
    </source>
</evidence>
<evidence type="ECO:0000269" key="5">
    <source>
    </source>
</evidence>
<evidence type="ECO:0000305" key="6"/>
<dbReference type="EMBL" id="ABSU01000015">
    <property type="protein sequence ID" value="EFE32410.1"/>
    <property type="molecule type" value="Genomic_DNA"/>
</dbReference>
<dbReference type="RefSeq" id="XP_003013050.1">
    <property type="nucleotide sequence ID" value="XM_003013004.1"/>
</dbReference>
<dbReference type="SMR" id="D4AWM9"/>
<dbReference type="GeneID" id="9523130"/>
<dbReference type="KEGG" id="abe:ARB_00595"/>
<dbReference type="eggNOG" id="ENOG502S5NH">
    <property type="taxonomic scope" value="Eukaryota"/>
</dbReference>
<dbReference type="HOGENOM" id="CLU_100634_0_0_1"/>
<dbReference type="OMA" id="NCYKCTL"/>
<dbReference type="OrthoDB" id="5555675at2759"/>
<dbReference type="Proteomes" id="UP000008866">
    <property type="component" value="Unassembled WGS sequence"/>
</dbReference>
<dbReference type="GO" id="GO:0005576">
    <property type="term" value="C:extracellular region"/>
    <property type="evidence" value="ECO:0007669"/>
    <property type="project" value="UniProtKB-SubCell"/>
</dbReference>
<dbReference type="InterPro" id="IPR055372">
    <property type="entry name" value="CBM96"/>
</dbReference>
<dbReference type="Pfam" id="PF24517">
    <property type="entry name" value="CBM96"/>
    <property type="match status" value="1"/>
</dbReference>
<name>A0595_ARTBC</name>
<proteinExistence type="evidence at protein level"/>
<protein>
    <recommendedName>
        <fullName evidence="6">Uncharacterized secreted protein ARB_00595</fullName>
    </recommendedName>
</protein>
<organism>
    <name type="scientific">Arthroderma benhamiae (strain ATCC MYA-4681 / CBS 112371)</name>
    <name type="common">Trichophyton mentagrophytes</name>
    <dbReference type="NCBI Taxonomy" id="663331"/>
    <lineage>
        <taxon>Eukaryota</taxon>
        <taxon>Fungi</taxon>
        <taxon>Dikarya</taxon>
        <taxon>Ascomycota</taxon>
        <taxon>Pezizomycotina</taxon>
        <taxon>Eurotiomycetes</taxon>
        <taxon>Eurotiomycetidae</taxon>
        <taxon>Onygenales</taxon>
        <taxon>Arthrodermataceae</taxon>
        <taxon>Trichophyton</taxon>
    </lineage>
</organism>
<keyword id="KW-0325">Glycoprotein</keyword>
<keyword id="KW-1185">Reference proteome</keyword>
<keyword id="KW-0964">Secreted</keyword>
<keyword id="KW-0732">Signal</keyword>
<accession>D4AWM9</accession>
<reference key="1">
    <citation type="journal article" date="2011" name="Genome Biol.">
        <title>Comparative and functional genomics provide insights into the pathogenicity of dermatophytic fungi.</title>
        <authorList>
            <person name="Burmester A."/>
            <person name="Shelest E."/>
            <person name="Gloeckner G."/>
            <person name="Heddergott C."/>
            <person name="Schindler S."/>
            <person name="Staib P."/>
            <person name="Heidel A."/>
            <person name="Felder M."/>
            <person name="Petzold A."/>
            <person name="Szafranski K."/>
            <person name="Feuermann M."/>
            <person name="Pedruzzi I."/>
            <person name="Priebe S."/>
            <person name="Groth M."/>
            <person name="Winkler R."/>
            <person name="Li W."/>
            <person name="Kniemeyer O."/>
            <person name="Schroeckh V."/>
            <person name="Hertweck C."/>
            <person name="Hube B."/>
            <person name="White T.C."/>
            <person name="Platzer M."/>
            <person name="Guthke R."/>
            <person name="Heitman J."/>
            <person name="Woestemeyer J."/>
            <person name="Zipfel P.F."/>
            <person name="Monod M."/>
            <person name="Brakhage A.A."/>
        </authorList>
    </citation>
    <scope>NUCLEOTIDE SEQUENCE [LARGE SCALE GENOMIC DNA]</scope>
    <scope>IDENTIFICATION BY MASS SPECTROMETRY</scope>
    <scope>SUBCELLULAR LOCATION</scope>
    <source>
        <strain>ATCC MYA-4681 / CBS 112371</strain>
    </source>
</reference>
<reference key="2">
    <citation type="journal article" date="2011" name="Proteomics">
        <title>Identification of novel secreted proteases during extracellular proteolysis by dermatophytes at acidic pH.</title>
        <authorList>
            <person name="Sriranganadane D."/>
            <person name="Waridel P."/>
            <person name="Salamin K."/>
            <person name="Feuermann M."/>
            <person name="Mignon B."/>
            <person name="Staib P."/>
            <person name="Neuhaus J.M."/>
            <person name="Quadroni M."/>
            <person name="Monod M."/>
        </authorList>
    </citation>
    <scope>IDENTIFICATION BY MASS SPECTROMETRY</scope>
    <scope>SUBCELLULAR LOCATION</scope>
</reference>